<name>NODB_BRAEL</name>
<proteinExistence type="inferred from homology"/>
<accession>P50352</accession>
<keyword id="KW-0963">Cytoplasm</keyword>
<keyword id="KW-0378">Hydrolase</keyword>
<keyword id="KW-0479">Metal-binding</keyword>
<keyword id="KW-0536">Nodulation</keyword>
<protein>
    <recommendedName>
        <fullName>Chitooligosaccharide deacetylase</fullName>
        <ecNumber>3.5.1.-</ecNumber>
    </recommendedName>
    <alternativeName>
        <fullName>Nodulation protein B</fullName>
    </alternativeName>
</protein>
<organism>
    <name type="scientific">Bradyrhizobium elkanii</name>
    <dbReference type="NCBI Taxonomy" id="29448"/>
    <lineage>
        <taxon>Bacteria</taxon>
        <taxon>Pseudomonadati</taxon>
        <taxon>Pseudomonadota</taxon>
        <taxon>Alphaproteobacteria</taxon>
        <taxon>Hyphomicrobiales</taxon>
        <taxon>Nitrobacteraceae</taxon>
        <taxon>Bradyrhizobium</taxon>
    </lineage>
</organism>
<gene>
    <name type="primary">nodB</name>
</gene>
<comment type="function">
    <text>Is involved in generating a small heat-stable compound (Nod), an acylated oligomer of N-acetylglucosamine, that stimulates mitosis in various plant protoplasts.</text>
</comment>
<comment type="subcellular location">
    <subcellularLocation>
        <location>Cytoplasm</location>
    </subcellularLocation>
</comment>
<comment type="similarity">
    <text evidence="3">Belongs to the polysaccharide deacetylase family.</text>
</comment>
<reference key="1">
    <citation type="journal article" date="1994" name="Mol. Plant Microbe Interact.">
        <title>DNA sequence of the common nodulation genes of Bradyrhizobium elkanii and their phylogenetic relationship to those of other nodulating bacteria.</title>
        <authorList>
            <person name="Dobert R.C."/>
            <person name="Breil B.T."/>
            <person name="Triplett E.W."/>
        </authorList>
    </citation>
    <scope>NUCLEOTIDE SEQUENCE [GENOMIC DNA]</scope>
    <source>
        <strain>USDA 94</strain>
    </source>
</reference>
<evidence type="ECO:0000250" key="1"/>
<evidence type="ECO:0000255" key="2">
    <source>
        <dbReference type="PROSITE-ProRule" id="PRU01014"/>
    </source>
</evidence>
<evidence type="ECO:0000305" key="3"/>
<feature type="chain" id="PRO_0000172747" description="Chitooligosaccharide deacetylase">
    <location>
        <begin position="1"/>
        <end position="219"/>
    </location>
</feature>
<feature type="domain" description="NodB homology" evidence="2">
    <location>
        <begin position="21"/>
        <end position="213"/>
    </location>
</feature>
<feature type="active site" description="Proton acceptor" evidence="1">
    <location>
        <position position="28"/>
    </location>
</feature>
<feature type="active site" description="Proton donor" evidence="1">
    <location>
        <position position="174"/>
    </location>
</feature>
<feature type="binding site" evidence="1">
    <location>
        <position position="79"/>
    </location>
    <ligand>
        <name>a divalent metal cation</name>
        <dbReference type="ChEBI" id="CHEBI:60240"/>
    </ligand>
</feature>
<feature type="binding site" evidence="1">
    <location>
        <position position="83"/>
    </location>
    <ligand>
        <name>a divalent metal cation</name>
        <dbReference type="ChEBI" id="CHEBI:60240"/>
    </ligand>
</feature>
<feature type="site" description="Raises pKa of active site His" evidence="1">
    <location>
        <position position="148"/>
    </location>
</feature>
<dbReference type="EC" id="3.5.1.-"/>
<dbReference type="EMBL" id="U04609">
    <property type="protein sequence ID" value="AAA63601.1"/>
    <property type="molecule type" value="Genomic_DNA"/>
</dbReference>
<dbReference type="RefSeq" id="WP_016848466.1">
    <property type="nucleotide sequence ID" value="NZ_BJNL01000082.1"/>
</dbReference>
<dbReference type="SMR" id="P50352"/>
<dbReference type="GeneID" id="92956824"/>
<dbReference type="GO" id="GO:0005737">
    <property type="term" value="C:cytoplasm"/>
    <property type="evidence" value="ECO:0007669"/>
    <property type="project" value="UniProtKB-SubCell"/>
</dbReference>
<dbReference type="GO" id="GO:0016020">
    <property type="term" value="C:membrane"/>
    <property type="evidence" value="ECO:0007669"/>
    <property type="project" value="TreeGrafter"/>
</dbReference>
<dbReference type="GO" id="GO:0016810">
    <property type="term" value="F:hydrolase activity, acting on carbon-nitrogen (but not peptide) bonds"/>
    <property type="evidence" value="ECO:0007669"/>
    <property type="project" value="InterPro"/>
</dbReference>
<dbReference type="GO" id="GO:0046872">
    <property type="term" value="F:metal ion binding"/>
    <property type="evidence" value="ECO:0007669"/>
    <property type="project" value="UniProtKB-KW"/>
</dbReference>
<dbReference type="GO" id="GO:0005975">
    <property type="term" value="P:carbohydrate metabolic process"/>
    <property type="evidence" value="ECO:0007669"/>
    <property type="project" value="InterPro"/>
</dbReference>
<dbReference type="Gene3D" id="3.20.20.370">
    <property type="entry name" value="Glycoside hydrolase/deacetylase"/>
    <property type="match status" value="1"/>
</dbReference>
<dbReference type="InterPro" id="IPR011330">
    <property type="entry name" value="Glyco_hydro/deAcase_b/a-brl"/>
</dbReference>
<dbReference type="InterPro" id="IPR002509">
    <property type="entry name" value="NODB_dom"/>
</dbReference>
<dbReference type="InterPro" id="IPR026402">
    <property type="entry name" value="Nodulat_NodB"/>
</dbReference>
<dbReference type="InterPro" id="IPR050248">
    <property type="entry name" value="Polysacc_deacetylase_ArnD"/>
</dbReference>
<dbReference type="NCBIfam" id="TIGR04243">
    <property type="entry name" value="nodulat_NodB"/>
    <property type="match status" value="1"/>
</dbReference>
<dbReference type="PANTHER" id="PTHR10587:SF133">
    <property type="entry name" value="CHITIN DEACETYLASE 1-RELATED"/>
    <property type="match status" value="1"/>
</dbReference>
<dbReference type="PANTHER" id="PTHR10587">
    <property type="entry name" value="GLYCOSYL TRANSFERASE-RELATED"/>
    <property type="match status" value="1"/>
</dbReference>
<dbReference type="Pfam" id="PF01522">
    <property type="entry name" value="Polysacc_deac_1"/>
    <property type="match status" value="1"/>
</dbReference>
<dbReference type="SUPFAM" id="SSF88713">
    <property type="entry name" value="Glycoside hydrolase/deacetylase"/>
    <property type="match status" value="1"/>
</dbReference>
<dbReference type="PROSITE" id="PS51677">
    <property type="entry name" value="NODB"/>
    <property type="match status" value="1"/>
</dbReference>
<sequence length="219" mass="24003">MNELIPLSAVRCNYGDVSGSRSVYLTFDDGPNPFCTPLVLDVLTQHRVPATFFVIGTYAADQPELIRRMIAEGHEVANHTMTHPDLSRCEAAEIHDEVLTASRAIRLACPQALPRHMRAPYGIWTEDVLATSAKAGLAAVHWSVDPRDWSRPGVDSIVKSVLAAVRPGAIVLLHDGYPPGEEASCIDSTSREQTVRALAYLIPALQLRGFEIHPLPQLH</sequence>